<reference key="1">
    <citation type="journal article" date="2008" name="J. Bacteriol.">
        <title>Genome sequence of Staphylococcus aureus strain Newman and comparative analysis of staphylococcal genomes: polymorphism and evolution of two major pathogenicity islands.</title>
        <authorList>
            <person name="Baba T."/>
            <person name="Bae T."/>
            <person name="Schneewind O."/>
            <person name="Takeuchi F."/>
            <person name="Hiramatsu K."/>
        </authorList>
    </citation>
    <scope>NUCLEOTIDE SEQUENCE [LARGE SCALE GENOMIC DNA]</scope>
    <source>
        <strain>Newman</strain>
    </source>
</reference>
<gene>
    <name evidence="1" type="primary">rbfA</name>
    <name type="ordered locus">NWMN_1179</name>
</gene>
<protein>
    <recommendedName>
        <fullName evidence="1">Ribosome-binding factor A</fullName>
    </recommendedName>
</protein>
<accession>A6QGG9</accession>
<dbReference type="EMBL" id="AP009351">
    <property type="protein sequence ID" value="BAF67451.1"/>
    <property type="status" value="ALT_INIT"/>
    <property type="molecule type" value="Genomic_DNA"/>
</dbReference>
<dbReference type="RefSeq" id="WP_000097322.1">
    <property type="nucleotide sequence ID" value="NZ_JBBIAE010000001.1"/>
</dbReference>
<dbReference type="SMR" id="A6QGG9"/>
<dbReference type="KEGG" id="sae:NWMN_1179"/>
<dbReference type="HOGENOM" id="CLU_089475_6_3_9"/>
<dbReference type="Proteomes" id="UP000006386">
    <property type="component" value="Chromosome"/>
</dbReference>
<dbReference type="GO" id="GO:0005829">
    <property type="term" value="C:cytosol"/>
    <property type="evidence" value="ECO:0007669"/>
    <property type="project" value="TreeGrafter"/>
</dbReference>
<dbReference type="GO" id="GO:0043024">
    <property type="term" value="F:ribosomal small subunit binding"/>
    <property type="evidence" value="ECO:0007669"/>
    <property type="project" value="TreeGrafter"/>
</dbReference>
<dbReference type="GO" id="GO:0030490">
    <property type="term" value="P:maturation of SSU-rRNA"/>
    <property type="evidence" value="ECO:0007669"/>
    <property type="project" value="UniProtKB-UniRule"/>
</dbReference>
<dbReference type="FunFam" id="3.30.300.20:FF:000009">
    <property type="entry name" value="Ribosome-binding factor A"/>
    <property type="match status" value="1"/>
</dbReference>
<dbReference type="Gene3D" id="3.30.300.20">
    <property type="match status" value="1"/>
</dbReference>
<dbReference type="HAMAP" id="MF_00003">
    <property type="entry name" value="RbfA"/>
    <property type="match status" value="1"/>
</dbReference>
<dbReference type="InterPro" id="IPR015946">
    <property type="entry name" value="KH_dom-like_a/b"/>
</dbReference>
<dbReference type="InterPro" id="IPR000238">
    <property type="entry name" value="RbfA"/>
</dbReference>
<dbReference type="InterPro" id="IPR023799">
    <property type="entry name" value="RbfA_dom_sf"/>
</dbReference>
<dbReference type="InterPro" id="IPR020053">
    <property type="entry name" value="Ribosome-bd_factorA_CS"/>
</dbReference>
<dbReference type="NCBIfam" id="TIGR00082">
    <property type="entry name" value="rbfA"/>
    <property type="match status" value="1"/>
</dbReference>
<dbReference type="PANTHER" id="PTHR33515">
    <property type="entry name" value="RIBOSOME-BINDING FACTOR A, CHLOROPLASTIC-RELATED"/>
    <property type="match status" value="1"/>
</dbReference>
<dbReference type="PANTHER" id="PTHR33515:SF1">
    <property type="entry name" value="RIBOSOME-BINDING FACTOR A, CHLOROPLASTIC-RELATED"/>
    <property type="match status" value="1"/>
</dbReference>
<dbReference type="Pfam" id="PF02033">
    <property type="entry name" value="RBFA"/>
    <property type="match status" value="1"/>
</dbReference>
<dbReference type="SUPFAM" id="SSF89919">
    <property type="entry name" value="Ribosome-binding factor A, RbfA"/>
    <property type="match status" value="1"/>
</dbReference>
<dbReference type="PROSITE" id="PS01319">
    <property type="entry name" value="RBFA"/>
    <property type="match status" value="1"/>
</dbReference>
<organism>
    <name type="scientific">Staphylococcus aureus (strain Newman)</name>
    <dbReference type="NCBI Taxonomy" id="426430"/>
    <lineage>
        <taxon>Bacteria</taxon>
        <taxon>Bacillati</taxon>
        <taxon>Bacillota</taxon>
        <taxon>Bacilli</taxon>
        <taxon>Bacillales</taxon>
        <taxon>Staphylococcaceae</taxon>
        <taxon>Staphylococcus</taxon>
    </lineage>
</organism>
<keyword id="KW-0963">Cytoplasm</keyword>
<keyword id="KW-0690">Ribosome biogenesis</keyword>
<sequence>MSSMRAERVGEQMKKELMDIINNKVKDPRVGFITITDVVLTNDLSQAKVFLTVLGNDKEVENTFKALDKAKGFIKSELGSRMRLRIMPELMYEYDQSIEYGNKIERMIQDLHKQDR</sequence>
<evidence type="ECO:0000255" key="1">
    <source>
        <dbReference type="HAMAP-Rule" id="MF_00003"/>
    </source>
</evidence>
<evidence type="ECO:0000305" key="2"/>
<feature type="chain" id="PRO_0000321255" description="Ribosome-binding factor A">
    <location>
        <begin position="1"/>
        <end position="116"/>
    </location>
</feature>
<comment type="function">
    <text evidence="1">One of several proteins that assist in the late maturation steps of the functional core of the 30S ribosomal subunit. Associates with free 30S ribosomal subunits (but not with 30S subunits that are part of 70S ribosomes or polysomes). Required for efficient processing of 16S rRNA. May interact with the 5'-terminal helix region of 16S rRNA.</text>
</comment>
<comment type="subunit">
    <text evidence="1">Monomer. Binds 30S ribosomal subunits, but not 50S ribosomal subunits or 70S ribosomes.</text>
</comment>
<comment type="subcellular location">
    <subcellularLocation>
        <location evidence="1">Cytoplasm</location>
    </subcellularLocation>
</comment>
<comment type="similarity">
    <text evidence="1">Belongs to the RbfA family.</text>
</comment>
<comment type="sequence caution" evidence="2">
    <conflict type="erroneous initiation">
        <sequence resource="EMBL-CDS" id="BAF67451"/>
    </conflict>
    <text>Extended N-terminus.</text>
</comment>
<name>RBFA_STAAE</name>
<proteinExistence type="inferred from homology"/>